<feature type="chain" id="PRO_1000019427" description="Cysteine desulfurase IscS">
    <location>
        <begin position="1"/>
        <end position="404"/>
    </location>
</feature>
<feature type="active site" description="Cysteine persulfide intermediate" evidence="1">
    <location>
        <position position="328"/>
    </location>
</feature>
<feature type="binding site" evidence="1">
    <location>
        <begin position="75"/>
        <end position="76"/>
    </location>
    <ligand>
        <name>pyridoxal 5'-phosphate</name>
        <dbReference type="ChEBI" id="CHEBI:597326"/>
    </ligand>
</feature>
<feature type="binding site" evidence="1">
    <location>
        <position position="155"/>
    </location>
    <ligand>
        <name>pyridoxal 5'-phosphate</name>
        <dbReference type="ChEBI" id="CHEBI:597326"/>
    </ligand>
</feature>
<feature type="binding site" evidence="1">
    <location>
        <position position="183"/>
    </location>
    <ligand>
        <name>pyridoxal 5'-phosphate</name>
        <dbReference type="ChEBI" id="CHEBI:597326"/>
    </ligand>
</feature>
<feature type="binding site" evidence="1">
    <location>
        <begin position="203"/>
        <end position="205"/>
    </location>
    <ligand>
        <name>pyridoxal 5'-phosphate</name>
        <dbReference type="ChEBI" id="CHEBI:597326"/>
    </ligand>
</feature>
<feature type="binding site" evidence="1">
    <location>
        <position position="243"/>
    </location>
    <ligand>
        <name>pyridoxal 5'-phosphate</name>
        <dbReference type="ChEBI" id="CHEBI:597326"/>
    </ligand>
</feature>
<feature type="binding site" description="via persulfide group" evidence="1">
    <location>
        <position position="328"/>
    </location>
    <ligand>
        <name>[2Fe-2S] cluster</name>
        <dbReference type="ChEBI" id="CHEBI:190135"/>
        <note>ligand shared with IscU</note>
    </ligand>
</feature>
<feature type="modified residue" description="N6-(pyridoxal phosphate)lysine" evidence="1">
    <location>
        <position position="206"/>
    </location>
</feature>
<comment type="function">
    <text evidence="1">Master enzyme that delivers sulfur to a number of partners involved in Fe-S cluster assembly, tRNA modification or cofactor biosynthesis. Catalyzes the removal of elemental sulfur atoms from cysteine to produce alanine. Functions as a sulfur delivery protein for Fe-S cluster synthesis onto IscU, an Fe-S scaffold assembly protein, as well as other S acceptor proteins.</text>
</comment>
<comment type="catalytic activity">
    <reaction evidence="1">
        <text>(sulfur carrier)-H + L-cysteine = (sulfur carrier)-SH + L-alanine</text>
        <dbReference type="Rhea" id="RHEA:43892"/>
        <dbReference type="Rhea" id="RHEA-COMP:14737"/>
        <dbReference type="Rhea" id="RHEA-COMP:14739"/>
        <dbReference type="ChEBI" id="CHEBI:29917"/>
        <dbReference type="ChEBI" id="CHEBI:35235"/>
        <dbReference type="ChEBI" id="CHEBI:57972"/>
        <dbReference type="ChEBI" id="CHEBI:64428"/>
        <dbReference type="EC" id="2.8.1.7"/>
    </reaction>
</comment>
<comment type="cofactor">
    <cofactor evidence="1">
        <name>pyridoxal 5'-phosphate</name>
        <dbReference type="ChEBI" id="CHEBI:597326"/>
    </cofactor>
</comment>
<comment type="pathway">
    <text evidence="1">Cofactor biosynthesis; iron-sulfur cluster biosynthesis.</text>
</comment>
<comment type="subunit">
    <text evidence="1">Homodimer. Forms a heterotetramer with IscU, interacts with other sulfur acceptors.</text>
</comment>
<comment type="subcellular location">
    <subcellularLocation>
        <location evidence="1">Cytoplasm</location>
    </subcellularLocation>
</comment>
<comment type="similarity">
    <text evidence="1">Belongs to the class-V pyridoxal-phosphate-dependent aminotransferase family. NifS/IscS subfamily.</text>
</comment>
<name>ISCS_ECTM1</name>
<evidence type="ECO:0000255" key="1">
    <source>
        <dbReference type="HAMAP-Rule" id="MF_00331"/>
    </source>
</evidence>
<organism>
    <name type="scientific">Ectopseudomonas mendocina (strain ymp)</name>
    <name type="common">Pseudomonas mendocina</name>
    <dbReference type="NCBI Taxonomy" id="399739"/>
    <lineage>
        <taxon>Bacteria</taxon>
        <taxon>Pseudomonadati</taxon>
        <taxon>Pseudomonadota</taxon>
        <taxon>Gammaproteobacteria</taxon>
        <taxon>Pseudomonadales</taxon>
        <taxon>Pseudomonadaceae</taxon>
        <taxon>Ectopseudomonas</taxon>
    </lineage>
</organism>
<protein>
    <recommendedName>
        <fullName evidence="1">Cysteine desulfurase IscS</fullName>
        <ecNumber evidence="1">2.8.1.7</ecNumber>
    </recommendedName>
</protein>
<reference key="1">
    <citation type="submission" date="2007-04" db="EMBL/GenBank/DDBJ databases">
        <title>Complete sequence of Pseudomonas mendocina ymp.</title>
        <authorList>
            <consortium name="US DOE Joint Genome Institute"/>
            <person name="Copeland A."/>
            <person name="Lucas S."/>
            <person name="Lapidus A."/>
            <person name="Barry K."/>
            <person name="Glavina del Rio T."/>
            <person name="Dalin E."/>
            <person name="Tice H."/>
            <person name="Pitluck S."/>
            <person name="Kiss H."/>
            <person name="Brettin T."/>
            <person name="Detter J.C."/>
            <person name="Bruce D."/>
            <person name="Han C."/>
            <person name="Schmutz J."/>
            <person name="Larimer F."/>
            <person name="Land M."/>
            <person name="Hauser L."/>
            <person name="Kyrpides N."/>
            <person name="Mikhailova N."/>
            <person name="Hersman L."/>
            <person name="Dubois J."/>
            <person name="Maurice P."/>
            <person name="Richardson P."/>
        </authorList>
    </citation>
    <scope>NUCLEOTIDE SEQUENCE [LARGE SCALE GENOMIC DNA]</scope>
    <source>
        <strain>ymp</strain>
    </source>
</reference>
<keyword id="KW-0001">2Fe-2S</keyword>
<keyword id="KW-0963">Cytoplasm</keyword>
<keyword id="KW-0408">Iron</keyword>
<keyword id="KW-0411">Iron-sulfur</keyword>
<keyword id="KW-0479">Metal-binding</keyword>
<keyword id="KW-0663">Pyridoxal phosphate</keyword>
<keyword id="KW-0808">Transferase</keyword>
<dbReference type="EC" id="2.8.1.7" evidence="1"/>
<dbReference type="EMBL" id="CP000680">
    <property type="protein sequence ID" value="ABP86259.1"/>
    <property type="molecule type" value="Genomic_DNA"/>
</dbReference>
<dbReference type="SMR" id="A4XY43"/>
<dbReference type="STRING" id="399739.Pmen_3511"/>
<dbReference type="KEGG" id="pmy:Pmen_3511"/>
<dbReference type="PATRIC" id="fig|399739.8.peg.3557"/>
<dbReference type="eggNOG" id="COG1104">
    <property type="taxonomic scope" value="Bacteria"/>
</dbReference>
<dbReference type="HOGENOM" id="CLU_003433_0_2_6"/>
<dbReference type="OrthoDB" id="9808002at2"/>
<dbReference type="UniPathway" id="UPA00266"/>
<dbReference type="GO" id="GO:1990221">
    <property type="term" value="C:L-cysteine desulfurase complex"/>
    <property type="evidence" value="ECO:0007669"/>
    <property type="project" value="UniProtKB-ARBA"/>
</dbReference>
<dbReference type="GO" id="GO:0051537">
    <property type="term" value="F:2 iron, 2 sulfur cluster binding"/>
    <property type="evidence" value="ECO:0007669"/>
    <property type="project" value="UniProtKB-UniRule"/>
</dbReference>
<dbReference type="GO" id="GO:0031071">
    <property type="term" value="F:cysteine desulfurase activity"/>
    <property type="evidence" value="ECO:0007669"/>
    <property type="project" value="UniProtKB-UniRule"/>
</dbReference>
<dbReference type="GO" id="GO:0046872">
    <property type="term" value="F:metal ion binding"/>
    <property type="evidence" value="ECO:0007669"/>
    <property type="project" value="UniProtKB-KW"/>
</dbReference>
<dbReference type="GO" id="GO:0030170">
    <property type="term" value="F:pyridoxal phosphate binding"/>
    <property type="evidence" value="ECO:0007669"/>
    <property type="project" value="UniProtKB-UniRule"/>
</dbReference>
<dbReference type="GO" id="GO:0044571">
    <property type="term" value="P:[2Fe-2S] cluster assembly"/>
    <property type="evidence" value="ECO:0007669"/>
    <property type="project" value="UniProtKB-UniRule"/>
</dbReference>
<dbReference type="FunFam" id="3.40.640.10:FF:000003">
    <property type="entry name" value="Cysteine desulfurase IscS"/>
    <property type="match status" value="1"/>
</dbReference>
<dbReference type="FunFam" id="3.90.1150.10:FF:000002">
    <property type="entry name" value="Cysteine desulfurase IscS"/>
    <property type="match status" value="1"/>
</dbReference>
<dbReference type="Gene3D" id="3.90.1150.10">
    <property type="entry name" value="Aspartate Aminotransferase, domain 1"/>
    <property type="match status" value="1"/>
</dbReference>
<dbReference type="Gene3D" id="3.40.640.10">
    <property type="entry name" value="Type I PLP-dependent aspartate aminotransferase-like (Major domain)"/>
    <property type="match status" value="1"/>
</dbReference>
<dbReference type="HAMAP" id="MF_00331">
    <property type="entry name" value="Cys_desulf_IscS"/>
    <property type="match status" value="1"/>
</dbReference>
<dbReference type="InterPro" id="IPR000192">
    <property type="entry name" value="Aminotrans_V_dom"/>
</dbReference>
<dbReference type="InterPro" id="IPR020578">
    <property type="entry name" value="Aminotrans_V_PyrdxlP_BS"/>
</dbReference>
<dbReference type="InterPro" id="IPR010240">
    <property type="entry name" value="Cys_deSase_IscS"/>
</dbReference>
<dbReference type="InterPro" id="IPR016454">
    <property type="entry name" value="Cysteine_dSase"/>
</dbReference>
<dbReference type="InterPro" id="IPR015424">
    <property type="entry name" value="PyrdxlP-dep_Trfase"/>
</dbReference>
<dbReference type="InterPro" id="IPR015421">
    <property type="entry name" value="PyrdxlP-dep_Trfase_major"/>
</dbReference>
<dbReference type="InterPro" id="IPR015422">
    <property type="entry name" value="PyrdxlP-dep_Trfase_small"/>
</dbReference>
<dbReference type="NCBIfam" id="TIGR02006">
    <property type="entry name" value="IscS"/>
    <property type="match status" value="1"/>
</dbReference>
<dbReference type="NCBIfam" id="NF010611">
    <property type="entry name" value="PRK14012.1"/>
    <property type="match status" value="1"/>
</dbReference>
<dbReference type="PANTHER" id="PTHR11601:SF34">
    <property type="entry name" value="CYSTEINE DESULFURASE"/>
    <property type="match status" value="1"/>
</dbReference>
<dbReference type="PANTHER" id="PTHR11601">
    <property type="entry name" value="CYSTEINE DESULFURYLASE FAMILY MEMBER"/>
    <property type="match status" value="1"/>
</dbReference>
<dbReference type="Pfam" id="PF00266">
    <property type="entry name" value="Aminotran_5"/>
    <property type="match status" value="1"/>
</dbReference>
<dbReference type="PIRSF" id="PIRSF005572">
    <property type="entry name" value="NifS"/>
    <property type="match status" value="1"/>
</dbReference>
<dbReference type="SUPFAM" id="SSF53383">
    <property type="entry name" value="PLP-dependent transferases"/>
    <property type="match status" value="1"/>
</dbReference>
<dbReference type="PROSITE" id="PS00595">
    <property type="entry name" value="AA_TRANSFER_CLASS_5"/>
    <property type="match status" value="1"/>
</dbReference>
<gene>
    <name evidence="1" type="primary">iscS</name>
    <name type="ordered locus">Pmen_3511</name>
</gene>
<proteinExistence type="inferred from homology"/>
<sequence>MKLPIYLDYSATTPVDPRVAQKMSECLLVDGNFGNPASRSHVFGWKAEEAVENARRQVAELVNADPREIVWTSGATESDNLAIKGVAHFYASKGKHIITSKIEHKAVLDTTRQLEREGFEVTYLEPGEDGLITPAMVEAALRDDTTLVSVMHVNNEIGTINDIAAIGELTRSRGVLLHVDAAQSTGKVEIDLEKMKVDLMSFSAHKTYGPKGVGALYVRRKPRVRLEAQTHGGGHERGMRSGTLATHQCVGMGEAFRIAKEDMAAENQRITALRDRFYRQLEGMEELYVNGSLTARVPHNLNLSFNYVEGESLIMALKDLAVSSGSACTSASLEPSYVLRALGRNDELAHSSIRFTFGRFTTEEEVDYAAAKVREAVDKLRELSPLWDMFKEGVDLSSVEWAAH</sequence>
<accession>A4XY43</accession>